<feature type="chain" id="PRO_1000212297" description="Glucose-1-phosphate adenylyltransferase">
    <location>
        <begin position="1"/>
        <end position="411"/>
    </location>
</feature>
<feature type="binding site" evidence="1">
    <location>
        <position position="164"/>
    </location>
    <ligand>
        <name>alpha-D-glucose 1-phosphate</name>
        <dbReference type="ChEBI" id="CHEBI:58601"/>
    </ligand>
</feature>
<feature type="binding site" evidence="1">
    <location>
        <begin position="179"/>
        <end position="180"/>
    </location>
    <ligand>
        <name>alpha-D-glucose 1-phosphate</name>
        <dbReference type="ChEBI" id="CHEBI:58601"/>
    </ligand>
</feature>
<feature type="binding site" evidence="1">
    <location>
        <position position="197"/>
    </location>
    <ligand>
        <name>alpha-D-glucose 1-phosphate</name>
        <dbReference type="ChEBI" id="CHEBI:58601"/>
    </ligand>
</feature>
<evidence type="ECO:0000255" key="1">
    <source>
        <dbReference type="HAMAP-Rule" id="MF_00624"/>
    </source>
</evidence>
<organism>
    <name type="scientific">Corynebacterium kroppenstedtii (strain DSM 44385 / JCM 11950 / CIP 105744 / CCUG 35717)</name>
    <dbReference type="NCBI Taxonomy" id="645127"/>
    <lineage>
        <taxon>Bacteria</taxon>
        <taxon>Bacillati</taxon>
        <taxon>Actinomycetota</taxon>
        <taxon>Actinomycetes</taxon>
        <taxon>Mycobacteriales</taxon>
        <taxon>Corynebacteriaceae</taxon>
        <taxon>Corynebacterium</taxon>
    </lineage>
</organism>
<dbReference type="EC" id="2.7.7.27" evidence="1"/>
<dbReference type="EMBL" id="CP001620">
    <property type="protein sequence ID" value="ACR17404.1"/>
    <property type="molecule type" value="Genomic_DNA"/>
</dbReference>
<dbReference type="RefSeq" id="WP_012731291.1">
    <property type="nucleotide sequence ID" value="NC_012704.1"/>
</dbReference>
<dbReference type="SMR" id="C4LHU9"/>
<dbReference type="STRING" id="645127.ckrop_0641"/>
<dbReference type="GeneID" id="92727215"/>
<dbReference type="KEGG" id="ckp:ckrop_0641"/>
<dbReference type="eggNOG" id="COG0448">
    <property type="taxonomic scope" value="Bacteria"/>
</dbReference>
<dbReference type="HOGENOM" id="CLU_029499_14_1_11"/>
<dbReference type="OrthoDB" id="9801810at2"/>
<dbReference type="UniPathway" id="UPA00164"/>
<dbReference type="Proteomes" id="UP000001473">
    <property type="component" value="Chromosome"/>
</dbReference>
<dbReference type="GO" id="GO:0005524">
    <property type="term" value="F:ATP binding"/>
    <property type="evidence" value="ECO:0007669"/>
    <property type="project" value="UniProtKB-KW"/>
</dbReference>
<dbReference type="GO" id="GO:0008878">
    <property type="term" value="F:glucose-1-phosphate adenylyltransferase activity"/>
    <property type="evidence" value="ECO:0007669"/>
    <property type="project" value="UniProtKB-UniRule"/>
</dbReference>
<dbReference type="GO" id="GO:0005978">
    <property type="term" value="P:glycogen biosynthetic process"/>
    <property type="evidence" value="ECO:0007669"/>
    <property type="project" value="UniProtKB-UniRule"/>
</dbReference>
<dbReference type="CDD" id="cd02508">
    <property type="entry name" value="ADP_Glucose_PP"/>
    <property type="match status" value="1"/>
</dbReference>
<dbReference type="CDD" id="cd04651">
    <property type="entry name" value="LbH_G1P_AT_C"/>
    <property type="match status" value="1"/>
</dbReference>
<dbReference type="Gene3D" id="2.160.10.10">
    <property type="entry name" value="Hexapeptide repeat proteins"/>
    <property type="match status" value="1"/>
</dbReference>
<dbReference type="Gene3D" id="3.90.550.10">
    <property type="entry name" value="Spore Coat Polysaccharide Biosynthesis Protein SpsA, Chain A"/>
    <property type="match status" value="1"/>
</dbReference>
<dbReference type="HAMAP" id="MF_00624">
    <property type="entry name" value="GlgC"/>
    <property type="match status" value="1"/>
</dbReference>
<dbReference type="InterPro" id="IPR011831">
    <property type="entry name" value="ADP-Glc_PPase"/>
</dbReference>
<dbReference type="InterPro" id="IPR005836">
    <property type="entry name" value="ADP_Glu_pyroP_CS"/>
</dbReference>
<dbReference type="InterPro" id="IPR023049">
    <property type="entry name" value="GlgC_bac"/>
</dbReference>
<dbReference type="InterPro" id="IPR056818">
    <property type="entry name" value="GlmU/GlgC-like_hexapep"/>
</dbReference>
<dbReference type="InterPro" id="IPR005835">
    <property type="entry name" value="NTP_transferase_dom"/>
</dbReference>
<dbReference type="InterPro" id="IPR029044">
    <property type="entry name" value="Nucleotide-diphossugar_trans"/>
</dbReference>
<dbReference type="InterPro" id="IPR011004">
    <property type="entry name" value="Trimer_LpxA-like_sf"/>
</dbReference>
<dbReference type="NCBIfam" id="TIGR02091">
    <property type="entry name" value="glgC"/>
    <property type="match status" value="1"/>
</dbReference>
<dbReference type="NCBIfam" id="NF001947">
    <property type="entry name" value="PRK00725.1"/>
    <property type="match status" value="1"/>
</dbReference>
<dbReference type="NCBIfam" id="NF002023">
    <property type="entry name" value="PRK00844.1"/>
    <property type="match status" value="1"/>
</dbReference>
<dbReference type="PANTHER" id="PTHR43523:SF2">
    <property type="entry name" value="GLUCOSE-1-PHOSPHATE ADENYLYLTRANSFERASE"/>
    <property type="match status" value="1"/>
</dbReference>
<dbReference type="PANTHER" id="PTHR43523">
    <property type="entry name" value="GLUCOSE-1-PHOSPHATE ADENYLYLTRANSFERASE-RELATED"/>
    <property type="match status" value="1"/>
</dbReference>
<dbReference type="Pfam" id="PF24894">
    <property type="entry name" value="Hexapep_GlmU"/>
    <property type="match status" value="1"/>
</dbReference>
<dbReference type="Pfam" id="PF00483">
    <property type="entry name" value="NTP_transferase"/>
    <property type="match status" value="1"/>
</dbReference>
<dbReference type="SUPFAM" id="SSF53448">
    <property type="entry name" value="Nucleotide-diphospho-sugar transferases"/>
    <property type="match status" value="1"/>
</dbReference>
<dbReference type="SUPFAM" id="SSF51161">
    <property type="entry name" value="Trimeric LpxA-like enzymes"/>
    <property type="match status" value="1"/>
</dbReference>
<dbReference type="PROSITE" id="PS00809">
    <property type="entry name" value="ADP_GLC_PYROPHOSPH_2"/>
    <property type="match status" value="1"/>
</dbReference>
<dbReference type="PROSITE" id="PS00810">
    <property type="entry name" value="ADP_GLC_PYROPHOSPH_3"/>
    <property type="match status" value="1"/>
</dbReference>
<name>GLGC_CORK4</name>
<reference key="1">
    <citation type="journal article" date="2008" name="J. Biotechnol.">
        <title>Ultrafast pyrosequencing of Corynebacterium kroppenstedtii DSM44385 revealed insights into the physiology of a lipophilic corynebacterium that lacks mycolic acids.</title>
        <authorList>
            <person name="Tauch A."/>
            <person name="Schneider J."/>
            <person name="Szczepanowski R."/>
            <person name="Tilker A."/>
            <person name="Viehoever P."/>
            <person name="Gartemann K.-H."/>
            <person name="Arnold W."/>
            <person name="Blom J."/>
            <person name="Brinkrolf K."/>
            <person name="Brune I."/>
            <person name="Goetker S."/>
            <person name="Weisshaar B."/>
            <person name="Goesmann A."/>
            <person name="Droege M."/>
            <person name="Puehler A."/>
        </authorList>
    </citation>
    <scope>NUCLEOTIDE SEQUENCE [LARGE SCALE GENOMIC DNA]</scope>
    <source>
        <strain>DSM 44385 / JCM 11950 / CIP 105744 / CCUG 35717</strain>
    </source>
</reference>
<accession>C4LHU9</accession>
<sequence>MRSQPHVLSIVLAGGEGKRLFPFTADRAKPAVPFGGSYRLIDFVLSNLVNAGYMKVCVLTQYKSHSLDRHISQSWQLSGLAGEYITPVPAQQRLGKRWFTGSADAILQSLNLIYDEDPEYIIVFGADHVYRMDPEQMVKEHIESGAACSVAGIRVPRKEATAFGCIQADDDGTITEFLEKPADPPATPDDPDVTFASMGNYVFTTQALIDALKEDSEDENSAHDMGGNIIPYFVNRGEAHVHDFSRNVVPGETDRDHGYWRDVGTVDAFYEAHMDLISVYPVFNLYNRKWPIHTSDDSNLPPAKFVKGGIAQSSIVAAGCIISAGTVRNSVLGPGVVVEEGASVEGCVLMDGVRIGKGAVVRHAILDKNVRVGDNALIGVDRARDSERFTLSQGGVVCVPKNYELHGADED</sequence>
<protein>
    <recommendedName>
        <fullName evidence="1">Glucose-1-phosphate adenylyltransferase</fullName>
        <ecNumber evidence="1">2.7.7.27</ecNumber>
    </recommendedName>
    <alternativeName>
        <fullName evidence="1">ADP-glucose pyrophosphorylase</fullName>
        <shortName evidence="1">ADPGlc PPase</shortName>
    </alternativeName>
    <alternativeName>
        <fullName evidence="1">ADP-glucose synthase</fullName>
    </alternativeName>
</protein>
<keyword id="KW-0067">ATP-binding</keyword>
<keyword id="KW-0119">Carbohydrate metabolism</keyword>
<keyword id="KW-0320">Glycogen biosynthesis</keyword>
<keyword id="KW-0321">Glycogen metabolism</keyword>
<keyword id="KW-0547">Nucleotide-binding</keyword>
<keyword id="KW-0548">Nucleotidyltransferase</keyword>
<keyword id="KW-1185">Reference proteome</keyword>
<keyword id="KW-0808">Transferase</keyword>
<proteinExistence type="inferred from homology"/>
<gene>
    <name evidence="1" type="primary">glgC</name>
    <name type="ordered locus">ckrop_0641</name>
</gene>
<comment type="function">
    <text evidence="1">Involved in the biosynthesis of ADP-glucose, a building block required for the elongation reactions to produce glycogen. Catalyzes the reaction between ATP and alpha-D-glucose 1-phosphate (G1P) to produce pyrophosphate and ADP-Glc.</text>
</comment>
<comment type="catalytic activity">
    <reaction evidence="1">
        <text>alpha-D-glucose 1-phosphate + ATP + H(+) = ADP-alpha-D-glucose + diphosphate</text>
        <dbReference type="Rhea" id="RHEA:12120"/>
        <dbReference type="ChEBI" id="CHEBI:15378"/>
        <dbReference type="ChEBI" id="CHEBI:30616"/>
        <dbReference type="ChEBI" id="CHEBI:33019"/>
        <dbReference type="ChEBI" id="CHEBI:57498"/>
        <dbReference type="ChEBI" id="CHEBI:58601"/>
        <dbReference type="EC" id="2.7.7.27"/>
    </reaction>
</comment>
<comment type="pathway">
    <text evidence="1">Glycan biosynthesis; glycogen biosynthesis.</text>
</comment>
<comment type="subunit">
    <text evidence="1">Homotetramer.</text>
</comment>
<comment type="similarity">
    <text evidence="1">Belongs to the bacterial/plant glucose-1-phosphate adenylyltransferase family.</text>
</comment>